<gene>
    <name evidence="1" type="primary">rsmA</name>
    <name evidence="1" type="synonym">ksgA</name>
    <name type="ordered locus">Noc_1721</name>
</gene>
<protein>
    <recommendedName>
        <fullName evidence="1">Ribosomal RNA small subunit methyltransferase A</fullName>
        <ecNumber evidence="1">2.1.1.182</ecNumber>
    </recommendedName>
    <alternativeName>
        <fullName evidence="1">16S rRNA (adenine(1518)-N(6)/adenine(1519)-N(6))-dimethyltransferase</fullName>
    </alternativeName>
    <alternativeName>
        <fullName evidence="1">16S rRNA dimethyladenosine transferase</fullName>
    </alternativeName>
    <alternativeName>
        <fullName evidence="1">16S rRNA dimethylase</fullName>
    </alternativeName>
    <alternativeName>
        <fullName evidence="1">S-adenosylmethionine-6-N', N'-adenosyl(rRNA) dimethyltransferase</fullName>
    </alternativeName>
</protein>
<proteinExistence type="inferred from homology"/>
<name>RSMA_NITOC</name>
<evidence type="ECO:0000255" key="1">
    <source>
        <dbReference type="HAMAP-Rule" id="MF_00607"/>
    </source>
</evidence>
<reference key="1">
    <citation type="journal article" date="2006" name="Appl. Environ. Microbiol.">
        <title>Complete genome sequence of the marine, chemolithoautotrophic, ammonia-oxidizing bacterium Nitrosococcus oceani ATCC 19707.</title>
        <authorList>
            <person name="Klotz M.G."/>
            <person name="Arp D.J."/>
            <person name="Chain P.S.G."/>
            <person name="El-Sheikh A.F."/>
            <person name="Hauser L.J."/>
            <person name="Hommes N.G."/>
            <person name="Larimer F.W."/>
            <person name="Malfatti S.A."/>
            <person name="Norton J.M."/>
            <person name="Poret-Peterson A.T."/>
            <person name="Vergez L.M."/>
            <person name="Ward B.B."/>
        </authorList>
    </citation>
    <scope>NUCLEOTIDE SEQUENCE [LARGE SCALE GENOMIC DNA]</scope>
    <source>
        <strain>ATCC 19707 / BCRC 17464 / JCM 30415 / NCIMB 11848 / C-107</strain>
    </source>
</reference>
<dbReference type="EC" id="2.1.1.182" evidence="1"/>
<dbReference type="EMBL" id="CP000127">
    <property type="protein sequence ID" value="ABA58193.1"/>
    <property type="molecule type" value="Genomic_DNA"/>
</dbReference>
<dbReference type="RefSeq" id="WP_002810562.1">
    <property type="nucleotide sequence ID" value="NC_007484.1"/>
</dbReference>
<dbReference type="SMR" id="Q3JAF3"/>
<dbReference type="FunCoup" id="Q3JAF3">
    <property type="interactions" value="512"/>
</dbReference>
<dbReference type="STRING" id="323261.Noc_1721"/>
<dbReference type="KEGG" id="noc:Noc_1721"/>
<dbReference type="eggNOG" id="COG0030">
    <property type="taxonomic scope" value="Bacteria"/>
</dbReference>
<dbReference type="HOGENOM" id="CLU_041220_0_1_6"/>
<dbReference type="InParanoid" id="Q3JAF3"/>
<dbReference type="Proteomes" id="UP000006838">
    <property type="component" value="Chromosome"/>
</dbReference>
<dbReference type="GO" id="GO:0005829">
    <property type="term" value="C:cytosol"/>
    <property type="evidence" value="ECO:0007669"/>
    <property type="project" value="TreeGrafter"/>
</dbReference>
<dbReference type="GO" id="GO:0052908">
    <property type="term" value="F:16S rRNA (adenine(1518)-N(6)/adenine(1519)-N(6))-dimethyltransferase activity"/>
    <property type="evidence" value="ECO:0007669"/>
    <property type="project" value="UniProtKB-EC"/>
</dbReference>
<dbReference type="GO" id="GO:0003723">
    <property type="term" value="F:RNA binding"/>
    <property type="evidence" value="ECO:0007669"/>
    <property type="project" value="UniProtKB-KW"/>
</dbReference>
<dbReference type="FunFam" id="1.10.8.100:FF:000001">
    <property type="entry name" value="Ribosomal RNA small subunit methyltransferase A"/>
    <property type="match status" value="1"/>
</dbReference>
<dbReference type="Gene3D" id="1.10.8.100">
    <property type="entry name" value="Ribosomal RNA adenine dimethylase-like, domain 2"/>
    <property type="match status" value="1"/>
</dbReference>
<dbReference type="Gene3D" id="3.40.50.150">
    <property type="entry name" value="Vaccinia Virus protein VP39"/>
    <property type="match status" value="1"/>
</dbReference>
<dbReference type="HAMAP" id="MF_00607">
    <property type="entry name" value="16SrRNA_methyltr_A"/>
    <property type="match status" value="1"/>
</dbReference>
<dbReference type="InterPro" id="IPR001737">
    <property type="entry name" value="KsgA/Erm"/>
</dbReference>
<dbReference type="InterPro" id="IPR023165">
    <property type="entry name" value="rRNA_Ade_diMease-like_C"/>
</dbReference>
<dbReference type="InterPro" id="IPR020596">
    <property type="entry name" value="rRNA_Ade_Mease_Trfase_CS"/>
</dbReference>
<dbReference type="InterPro" id="IPR020598">
    <property type="entry name" value="rRNA_Ade_methylase_Trfase_N"/>
</dbReference>
<dbReference type="InterPro" id="IPR011530">
    <property type="entry name" value="rRNA_adenine_dimethylase"/>
</dbReference>
<dbReference type="InterPro" id="IPR029063">
    <property type="entry name" value="SAM-dependent_MTases_sf"/>
</dbReference>
<dbReference type="NCBIfam" id="TIGR00755">
    <property type="entry name" value="ksgA"/>
    <property type="match status" value="1"/>
</dbReference>
<dbReference type="PANTHER" id="PTHR11727">
    <property type="entry name" value="DIMETHYLADENOSINE TRANSFERASE"/>
    <property type="match status" value="1"/>
</dbReference>
<dbReference type="PANTHER" id="PTHR11727:SF7">
    <property type="entry name" value="DIMETHYLADENOSINE TRANSFERASE-RELATED"/>
    <property type="match status" value="1"/>
</dbReference>
<dbReference type="Pfam" id="PF00398">
    <property type="entry name" value="RrnaAD"/>
    <property type="match status" value="1"/>
</dbReference>
<dbReference type="SMART" id="SM00650">
    <property type="entry name" value="rADc"/>
    <property type="match status" value="1"/>
</dbReference>
<dbReference type="SUPFAM" id="SSF53335">
    <property type="entry name" value="S-adenosyl-L-methionine-dependent methyltransferases"/>
    <property type="match status" value="1"/>
</dbReference>
<dbReference type="PROSITE" id="PS01131">
    <property type="entry name" value="RRNA_A_DIMETH"/>
    <property type="match status" value="1"/>
</dbReference>
<dbReference type="PROSITE" id="PS51689">
    <property type="entry name" value="SAM_RNA_A_N6_MT"/>
    <property type="match status" value="1"/>
</dbReference>
<feature type="chain" id="PRO_0000257312" description="Ribosomal RNA small subunit methyltransferase A">
    <location>
        <begin position="1"/>
        <end position="264"/>
    </location>
</feature>
<feature type="binding site" evidence="1">
    <location>
        <position position="15"/>
    </location>
    <ligand>
        <name>S-adenosyl-L-methionine</name>
        <dbReference type="ChEBI" id="CHEBI:59789"/>
    </ligand>
</feature>
<feature type="binding site" evidence="1">
    <location>
        <position position="17"/>
    </location>
    <ligand>
        <name>S-adenosyl-L-methionine</name>
        <dbReference type="ChEBI" id="CHEBI:59789"/>
    </ligand>
</feature>
<feature type="binding site" evidence="1">
    <location>
        <position position="42"/>
    </location>
    <ligand>
        <name>S-adenosyl-L-methionine</name>
        <dbReference type="ChEBI" id="CHEBI:59789"/>
    </ligand>
</feature>
<feature type="binding site" evidence="1">
    <location>
        <position position="63"/>
    </location>
    <ligand>
        <name>S-adenosyl-L-methionine</name>
        <dbReference type="ChEBI" id="CHEBI:59789"/>
    </ligand>
</feature>
<feature type="binding site" evidence="1">
    <location>
        <position position="88"/>
    </location>
    <ligand>
        <name>S-adenosyl-L-methionine</name>
        <dbReference type="ChEBI" id="CHEBI:59789"/>
    </ligand>
</feature>
<feature type="binding site" evidence="1">
    <location>
        <position position="109"/>
    </location>
    <ligand>
        <name>S-adenosyl-L-methionine</name>
        <dbReference type="ChEBI" id="CHEBI:59789"/>
    </ligand>
</feature>
<comment type="function">
    <text evidence="1">Specifically dimethylates two adjacent adenosines (A1518 and A1519) in the loop of a conserved hairpin near the 3'-end of 16S rRNA in the 30S particle. May play a critical role in biogenesis of 30S subunits.</text>
</comment>
<comment type="catalytic activity">
    <reaction evidence="1">
        <text>adenosine(1518)/adenosine(1519) in 16S rRNA + 4 S-adenosyl-L-methionine = N(6)-dimethyladenosine(1518)/N(6)-dimethyladenosine(1519) in 16S rRNA + 4 S-adenosyl-L-homocysteine + 4 H(+)</text>
        <dbReference type="Rhea" id="RHEA:19609"/>
        <dbReference type="Rhea" id="RHEA-COMP:10232"/>
        <dbReference type="Rhea" id="RHEA-COMP:10233"/>
        <dbReference type="ChEBI" id="CHEBI:15378"/>
        <dbReference type="ChEBI" id="CHEBI:57856"/>
        <dbReference type="ChEBI" id="CHEBI:59789"/>
        <dbReference type="ChEBI" id="CHEBI:74411"/>
        <dbReference type="ChEBI" id="CHEBI:74493"/>
        <dbReference type="EC" id="2.1.1.182"/>
    </reaction>
</comment>
<comment type="subcellular location">
    <subcellularLocation>
        <location evidence="1">Cytoplasm</location>
    </subcellularLocation>
</comment>
<comment type="similarity">
    <text evidence="1">Belongs to the class I-like SAM-binding methyltransferase superfamily. rRNA adenine N(6)-methyltransferase family. RsmA subfamily.</text>
</comment>
<accession>Q3JAF3</accession>
<sequence>MNTLGHRARKRFGQHFLHDKGVIERLLRAINPQLNDLMVEIGPGQGALTLPLLHCLGHLEAIELDRDLAAYLVERCASEGNLRLHNVDSLTFDFRTLAHENRRLRVVGNLPYNISTPLLFHLLGQIGILEDMHFMLQREVVTRLAAKPGGKDYGRLSVMVQFYCEVEPLFTVKSGAFVPPPKVDSMVVRLIPHRPSLAPNISHGALNRVVSQAFSQRRKTLANALKGLLSSAELIALGIDPRQRPETISLEDYLALTRYWLKAQ</sequence>
<keyword id="KW-0963">Cytoplasm</keyword>
<keyword id="KW-0489">Methyltransferase</keyword>
<keyword id="KW-1185">Reference proteome</keyword>
<keyword id="KW-0694">RNA-binding</keyword>
<keyword id="KW-0698">rRNA processing</keyword>
<keyword id="KW-0949">S-adenosyl-L-methionine</keyword>
<keyword id="KW-0808">Transferase</keyword>
<organism>
    <name type="scientific">Nitrosococcus oceani (strain ATCC 19707 / BCRC 17464 / JCM 30415 / NCIMB 11848 / C-107)</name>
    <dbReference type="NCBI Taxonomy" id="323261"/>
    <lineage>
        <taxon>Bacteria</taxon>
        <taxon>Pseudomonadati</taxon>
        <taxon>Pseudomonadota</taxon>
        <taxon>Gammaproteobacteria</taxon>
        <taxon>Chromatiales</taxon>
        <taxon>Chromatiaceae</taxon>
        <taxon>Nitrosococcus</taxon>
    </lineage>
</organism>